<proteinExistence type="inferred from homology"/>
<accession>Q5HF56</accession>
<comment type="function">
    <text evidence="1">Negative regulator of FtsZ ring formation; modulates the frequency and position of FtsZ ring formation. Inhibits FtsZ ring formation at polar sites. Interacts either with FtsZ or with one of its binding partners to promote depolymerization.</text>
</comment>
<comment type="subcellular location">
    <subcellularLocation>
        <location>Cell membrane</location>
        <topology>Single-pass membrane protein</topology>
    </subcellularLocation>
    <text evidence="1">Colocalized with FtsZ to the nascent septal site.</text>
</comment>
<comment type="similarity">
    <text evidence="1">Belongs to the EzrA family.</text>
</comment>
<keyword id="KW-0131">Cell cycle</keyword>
<keyword id="KW-0132">Cell division</keyword>
<keyword id="KW-1003">Cell membrane</keyword>
<keyword id="KW-0175">Coiled coil</keyword>
<keyword id="KW-0472">Membrane</keyword>
<keyword id="KW-0717">Septation</keyword>
<keyword id="KW-0812">Transmembrane</keyword>
<keyword id="KW-1133">Transmembrane helix</keyword>
<evidence type="ECO:0000255" key="1">
    <source>
        <dbReference type="HAMAP-Rule" id="MF_00728"/>
    </source>
</evidence>
<sequence length="564" mass="66200">MVLYIILAIIVIILIAVGVLFYLRSNKRQIIEKAIERKNEIETLPFDQNLAQLSKLNLKGETKTKYDAMKKDNVESTNKYLAPVEEKIHNAEALLDKFSFNASQSEIDDANELMDSYEQSYQQQLEDVNEIIALYKDNDELYDKCKVDYREMKRDVLANRHQFGEAASLLETEIEKFEPRLEQYEVLKADGNYVQAHNHIAALNEQMKQLRSYMEEIPELIRETQKELPGQFQDLKYGCRDLKVEGYDLDHVKVDSTLQSLKTELSFVEPLISRLELEEANDKLANINDKLDDMYDLIEHEVKAKNDVEETKDIITDNLFKAKDMNYTLQTEIEYVRENYYINESDAQSVRQFENEIQSLISVYDDILKEMSKSAVRYSEVQDNLQYLEDHVTVINDKQEKLQNHLIQLREDEAEAEDNLLRVQSKKEEVYRRLLASNLTSVPERFIIMKNEIDHEVRDVNEQFSERPIHVKQLKDKVSKIVIQMNTFEDEANDVLVNAVYAEKLIQYGNRYRKDYSNVDKSLNEAERLFKNNRYKRAIEIAEQALESVEPGVTKHIEEEVIKQ</sequence>
<organism>
    <name type="scientific">Staphylococcus aureus (strain COL)</name>
    <dbReference type="NCBI Taxonomy" id="93062"/>
    <lineage>
        <taxon>Bacteria</taxon>
        <taxon>Bacillati</taxon>
        <taxon>Bacillota</taxon>
        <taxon>Bacilli</taxon>
        <taxon>Bacillales</taxon>
        <taxon>Staphylococcaceae</taxon>
        <taxon>Staphylococcus</taxon>
    </lineage>
</organism>
<reference key="1">
    <citation type="journal article" date="2005" name="J. Bacteriol.">
        <title>Insights on evolution of virulence and resistance from the complete genome analysis of an early methicillin-resistant Staphylococcus aureus strain and a biofilm-producing methicillin-resistant Staphylococcus epidermidis strain.</title>
        <authorList>
            <person name="Gill S.R."/>
            <person name="Fouts D.E."/>
            <person name="Archer G.L."/>
            <person name="Mongodin E.F."/>
            <person name="DeBoy R.T."/>
            <person name="Ravel J."/>
            <person name="Paulsen I.T."/>
            <person name="Kolonay J.F."/>
            <person name="Brinkac L.M."/>
            <person name="Beanan M.J."/>
            <person name="Dodson R.J."/>
            <person name="Daugherty S.C."/>
            <person name="Madupu R."/>
            <person name="Angiuoli S.V."/>
            <person name="Durkin A.S."/>
            <person name="Haft D.H."/>
            <person name="Vamathevan J.J."/>
            <person name="Khouri H."/>
            <person name="Utterback T.R."/>
            <person name="Lee C."/>
            <person name="Dimitrov G."/>
            <person name="Jiang L."/>
            <person name="Qin H."/>
            <person name="Weidman J."/>
            <person name="Tran K."/>
            <person name="Kang K.H."/>
            <person name="Hance I.R."/>
            <person name="Nelson K.E."/>
            <person name="Fraser C.M."/>
        </authorList>
    </citation>
    <scope>NUCLEOTIDE SEQUENCE [LARGE SCALE GENOMIC DNA]</scope>
    <source>
        <strain>COL</strain>
    </source>
</reference>
<dbReference type="EMBL" id="CP000046">
    <property type="protein sequence ID" value="AAW38296.1"/>
    <property type="molecule type" value="Genomic_DNA"/>
</dbReference>
<dbReference type="RefSeq" id="WP_000244865.1">
    <property type="nucleotide sequence ID" value="NZ_JBGOFO010000008.1"/>
</dbReference>
<dbReference type="SMR" id="Q5HF56"/>
<dbReference type="KEGG" id="sac:SACOL1767"/>
<dbReference type="HOGENOM" id="CLU_034079_1_0_9"/>
<dbReference type="Proteomes" id="UP000000530">
    <property type="component" value="Chromosome"/>
</dbReference>
<dbReference type="GO" id="GO:0005886">
    <property type="term" value="C:plasma membrane"/>
    <property type="evidence" value="ECO:0007669"/>
    <property type="project" value="UniProtKB-SubCell"/>
</dbReference>
<dbReference type="GO" id="GO:0005940">
    <property type="term" value="C:septin ring"/>
    <property type="evidence" value="ECO:0007669"/>
    <property type="project" value="InterPro"/>
</dbReference>
<dbReference type="GO" id="GO:0000917">
    <property type="term" value="P:division septum assembly"/>
    <property type="evidence" value="ECO:0007669"/>
    <property type="project" value="UniProtKB-KW"/>
</dbReference>
<dbReference type="GO" id="GO:0000921">
    <property type="term" value="P:septin ring assembly"/>
    <property type="evidence" value="ECO:0007669"/>
    <property type="project" value="InterPro"/>
</dbReference>
<dbReference type="HAMAP" id="MF_00728">
    <property type="entry name" value="EzrA"/>
    <property type="match status" value="1"/>
</dbReference>
<dbReference type="InterPro" id="IPR010379">
    <property type="entry name" value="EzrA"/>
</dbReference>
<dbReference type="NCBIfam" id="NF003412">
    <property type="entry name" value="PRK04778.1-6"/>
    <property type="match status" value="1"/>
</dbReference>
<dbReference type="Pfam" id="PF06160">
    <property type="entry name" value="EzrA"/>
    <property type="match status" value="1"/>
</dbReference>
<gene>
    <name evidence="1" type="primary">ezrA</name>
    <name type="ordered locus">SACOL1767</name>
</gene>
<name>EZRA_STAAC</name>
<protein>
    <recommendedName>
        <fullName evidence="1">Septation ring formation regulator EzrA</fullName>
    </recommendedName>
</protein>
<feature type="chain" id="PRO_0000172878" description="Septation ring formation regulator EzrA">
    <location>
        <begin position="1"/>
        <end position="564"/>
    </location>
</feature>
<feature type="topological domain" description="Extracellular" evidence="1">
    <location>
        <begin position="1"/>
        <end position="4"/>
    </location>
</feature>
<feature type="transmembrane region" description="Helical" evidence="1">
    <location>
        <begin position="5"/>
        <end position="23"/>
    </location>
</feature>
<feature type="topological domain" description="Cytoplasmic" evidence="1">
    <location>
        <begin position="24"/>
        <end position="564"/>
    </location>
</feature>
<feature type="coiled-coil region" evidence="1">
    <location>
        <begin position="99"/>
        <end position="138"/>
    </location>
</feature>
<feature type="coiled-coil region" evidence="1">
    <location>
        <begin position="190"/>
        <end position="223"/>
    </location>
</feature>
<feature type="coiled-coil region" evidence="1">
    <location>
        <begin position="271"/>
        <end position="300"/>
    </location>
</feature>
<feature type="coiled-coil region" evidence="1">
    <location>
        <begin position="350"/>
        <end position="435"/>
    </location>
</feature>
<feature type="coiled-coil region" evidence="1">
    <location>
        <begin position="471"/>
        <end position="550"/>
    </location>
</feature>